<name>Y037_ABVP</name>
<evidence type="ECO:0000255" key="1"/>
<evidence type="ECO:0000305" key="2"/>
<dbReference type="EMBL" id="EF432053">
    <property type="protein sequence ID" value="ABP73431.1"/>
    <property type="molecule type" value="Genomic_DNA"/>
</dbReference>
<dbReference type="RefSeq" id="YP_001210345.1">
    <property type="nucleotide sequence ID" value="NC_009452.1"/>
</dbReference>
<dbReference type="SMR" id="A4ZUC7"/>
<dbReference type="GeneID" id="5129821"/>
<dbReference type="KEGG" id="vg:5129821"/>
<dbReference type="Proteomes" id="UP000000513">
    <property type="component" value="Segment"/>
</dbReference>
<dbReference type="GO" id="GO:0033644">
    <property type="term" value="C:host cell membrane"/>
    <property type="evidence" value="ECO:0007669"/>
    <property type="project" value="UniProtKB-SubCell"/>
</dbReference>
<dbReference type="GO" id="GO:0016020">
    <property type="term" value="C:membrane"/>
    <property type="evidence" value="ECO:0007669"/>
    <property type="project" value="UniProtKB-KW"/>
</dbReference>
<gene>
    <name type="ORF">ORF37</name>
</gene>
<organismHost>
    <name type="scientific">Acidianus convivator</name>
    <dbReference type="NCBI Taxonomy" id="269667"/>
</organismHost>
<keyword id="KW-1043">Host membrane</keyword>
<keyword id="KW-0472">Membrane</keyword>
<keyword id="KW-1185">Reference proteome</keyword>
<keyword id="KW-0812">Transmembrane</keyword>
<keyword id="KW-1133">Transmembrane helix</keyword>
<organism>
    <name type="scientific">Acidianus bottle-shaped virus (isolate Italy/Pozzuoli)</name>
    <name type="common">ABV</name>
    <dbReference type="NCBI Taxonomy" id="654911"/>
    <lineage>
        <taxon>Viruses</taxon>
        <taxon>Viruses incertae sedis</taxon>
        <taxon>Ampullaviridae</taxon>
        <taxon>Bottigliavirus</taxon>
        <taxon>Bottigliavirus ABV</taxon>
    </lineage>
</organism>
<protein>
    <recommendedName>
        <fullName>Uncharacterized protein ORF37</fullName>
    </recommendedName>
</protein>
<sequence length="37" mass="4064">MTVEGLTILRSPTFLTIIVLLMIVFGIAIVALLTQYV</sequence>
<reference key="1">
    <citation type="journal article" date="2007" name="Virology">
        <title>Genome of the Acidianus bottle-shaped virus and insights into the replication and packaging mechanisms.</title>
        <authorList>
            <person name="Peng X."/>
            <person name="Basta T."/>
            <person name="Haring M."/>
            <person name="Garrett R.A."/>
            <person name="Prangishvili D."/>
        </authorList>
    </citation>
    <scope>NUCLEOTIDE SEQUENCE [GENOMIC DNA]</scope>
</reference>
<proteinExistence type="predicted"/>
<feature type="chain" id="PRO_0000384820" description="Uncharacterized protein ORF37">
    <location>
        <begin position="1"/>
        <end position="37"/>
    </location>
</feature>
<feature type="transmembrane region" description="Helical" evidence="1">
    <location>
        <begin position="13"/>
        <end position="33"/>
    </location>
</feature>
<accession>A4ZUC7</accession>
<comment type="subcellular location">
    <subcellularLocation>
        <location evidence="2">Host membrane</location>
        <topology evidence="2">Single-pass membrane protein</topology>
    </subcellularLocation>
</comment>